<feature type="chain" id="PRO_1000138533" description="Orotidine 5'-phosphate decarboxylase">
    <location>
        <begin position="1"/>
        <end position="227"/>
    </location>
</feature>
<feature type="active site" description="Proton donor" evidence="1">
    <location>
        <position position="61"/>
    </location>
</feature>
<feature type="binding site" evidence="1">
    <location>
        <position position="8"/>
    </location>
    <ligand>
        <name>substrate</name>
    </ligand>
</feature>
<feature type="binding site" evidence="1">
    <location>
        <position position="30"/>
    </location>
    <ligand>
        <name>substrate</name>
    </ligand>
</feature>
<feature type="binding site" evidence="1">
    <location>
        <begin position="59"/>
        <end position="68"/>
    </location>
    <ligand>
        <name>substrate</name>
    </ligand>
</feature>
<feature type="binding site" evidence="1">
    <location>
        <position position="118"/>
    </location>
    <ligand>
        <name>substrate</name>
    </ligand>
</feature>
<feature type="binding site" evidence="1">
    <location>
        <position position="178"/>
    </location>
    <ligand>
        <name>substrate</name>
    </ligand>
</feature>
<feature type="binding site" evidence="1">
    <location>
        <position position="187"/>
    </location>
    <ligand>
        <name>substrate</name>
    </ligand>
</feature>
<feature type="binding site" evidence="1">
    <location>
        <position position="207"/>
    </location>
    <ligand>
        <name>substrate</name>
    </ligand>
</feature>
<feature type="binding site" evidence="1">
    <location>
        <position position="208"/>
    </location>
    <ligand>
        <name>substrate</name>
    </ligand>
</feature>
<sequence length="227" mass="25322">MQLCVALDLEKKEDNLSLLQELKGLDLWAKVGLRSFIRDGAVFLDEIRKIDGNFKIFLDLKLYDIPYTMANAALECAKLEVDMLTVHLSSAKSALTILMQRLNALKKRPLIMGVSALTSFSEEEFLMVYNAPLKTQAIKLSAMGKESGIDGVVCSVFESLAVKEALGKDFLTLTPGIRLDKSDKEDQERVANAKEAKQNLSDFIVVGRPIYHAKEPREVVLELLKDC</sequence>
<protein>
    <recommendedName>
        <fullName evidence="1">Orotidine 5'-phosphate decarboxylase</fullName>
        <ecNumber evidence="1">4.1.1.23</ecNumber>
    </recommendedName>
    <alternativeName>
        <fullName evidence="1">OMP decarboxylase</fullName>
        <shortName evidence="1">OMPDCase</shortName>
        <shortName evidence="1">OMPdecase</shortName>
    </alternativeName>
</protein>
<proteinExistence type="inferred from homology"/>
<reference key="1">
    <citation type="submission" date="2008-10" db="EMBL/GenBank/DDBJ databases">
        <title>The complete genome sequence of Helicobacter pylori strain P12.</title>
        <authorList>
            <person name="Fischer W."/>
            <person name="Windhager L."/>
            <person name="Karnholz A."/>
            <person name="Zeiller M."/>
            <person name="Zimmer R."/>
            <person name="Haas R."/>
        </authorList>
    </citation>
    <scope>NUCLEOTIDE SEQUENCE [LARGE SCALE GENOMIC DNA]</scope>
    <source>
        <strain>P12</strain>
    </source>
</reference>
<accession>B6JPA4</accession>
<organism>
    <name type="scientific">Helicobacter pylori (strain P12)</name>
    <dbReference type="NCBI Taxonomy" id="570508"/>
    <lineage>
        <taxon>Bacteria</taxon>
        <taxon>Pseudomonadati</taxon>
        <taxon>Campylobacterota</taxon>
        <taxon>Epsilonproteobacteria</taxon>
        <taxon>Campylobacterales</taxon>
        <taxon>Helicobacteraceae</taxon>
        <taxon>Helicobacter</taxon>
    </lineage>
</organism>
<evidence type="ECO:0000255" key="1">
    <source>
        <dbReference type="HAMAP-Rule" id="MF_01200"/>
    </source>
</evidence>
<gene>
    <name evidence="1" type="primary">pyrF</name>
    <name type="ordered locus">HPP12_0005</name>
</gene>
<dbReference type="EC" id="4.1.1.23" evidence="1"/>
<dbReference type="EMBL" id="CP001217">
    <property type="protein sequence ID" value="ACJ07165.1"/>
    <property type="molecule type" value="Genomic_DNA"/>
</dbReference>
<dbReference type="SMR" id="B6JPA4"/>
<dbReference type="KEGG" id="hpp:HPP12_0005"/>
<dbReference type="HOGENOM" id="CLU_067069_1_1_7"/>
<dbReference type="UniPathway" id="UPA00070">
    <property type="reaction ID" value="UER00120"/>
</dbReference>
<dbReference type="Proteomes" id="UP000008198">
    <property type="component" value="Chromosome"/>
</dbReference>
<dbReference type="GO" id="GO:0005829">
    <property type="term" value="C:cytosol"/>
    <property type="evidence" value="ECO:0007669"/>
    <property type="project" value="TreeGrafter"/>
</dbReference>
<dbReference type="GO" id="GO:0004590">
    <property type="term" value="F:orotidine-5'-phosphate decarboxylase activity"/>
    <property type="evidence" value="ECO:0007669"/>
    <property type="project" value="UniProtKB-UniRule"/>
</dbReference>
<dbReference type="GO" id="GO:0006207">
    <property type="term" value="P:'de novo' pyrimidine nucleobase biosynthetic process"/>
    <property type="evidence" value="ECO:0007669"/>
    <property type="project" value="InterPro"/>
</dbReference>
<dbReference type="GO" id="GO:0044205">
    <property type="term" value="P:'de novo' UMP biosynthetic process"/>
    <property type="evidence" value="ECO:0007669"/>
    <property type="project" value="UniProtKB-UniRule"/>
</dbReference>
<dbReference type="CDD" id="cd04725">
    <property type="entry name" value="OMP_decarboxylase_like"/>
    <property type="match status" value="1"/>
</dbReference>
<dbReference type="FunFam" id="3.20.20.70:FF:000345">
    <property type="entry name" value="Orotidine 5'-phosphate decarboxylase"/>
    <property type="match status" value="1"/>
</dbReference>
<dbReference type="Gene3D" id="3.20.20.70">
    <property type="entry name" value="Aldolase class I"/>
    <property type="match status" value="1"/>
</dbReference>
<dbReference type="HAMAP" id="MF_01200_B">
    <property type="entry name" value="OMPdecase_type1_B"/>
    <property type="match status" value="1"/>
</dbReference>
<dbReference type="InterPro" id="IPR013785">
    <property type="entry name" value="Aldolase_TIM"/>
</dbReference>
<dbReference type="InterPro" id="IPR014732">
    <property type="entry name" value="OMPdecase"/>
</dbReference>
<dbReference type="InterPro" id="IPR018089">
    <property type="entry name" value="OMPdecase_AS"/>
</dbReference>
<dbReference type="InterPro" id="IPR047596">
    <property type="entry name" value="OMPdecase_bac"/>
</dbReference>
<dbReference type="InterPro" id="IPR001754">
    <property type="entry name" value="OMPdeCOase_dom"/>
</dbReference>
<dbReference type="InterPro" id="IPR011060">
    <property type="entry name" value="RibuloseP-bd_barrel"/>
</dbReference>
<dbReference type="NCBIfam" id="NF001273">
    <property type="entry name" value="PRK00230.1"/>
    <property type="match status" value="1"/>
</dbReference>
<dbReference type="NCBIfam" id="TIGR01740">
    <property type="entry name" value="pyrF"/>
    <property type="match status" value="1"/>
</dbReference>
<dbReference type="PANTHER" id="PTHR32119">
    <property type="entry name" value="OROTIDINE 5'-PHOSPHATE DECARBOXYLASE"/>
    <property type="match status" value="1"/>
</dbReference>
<dbReference type="PANTHER" id="PTHR32119:SF2">
    <property type="entry name" value="OROTIDINE 5'-PHOSPHATE DECARBOXYLASE"/>
    <property type="match status" value="1"/>
</dbReference>
<dbReference type="Pfam" id="PF00215">
    <property type="entry name" value="OMPdecase"/>
    <property type="match status" value="1"/>
</dbReference>
<dbReference type="SMART" id="SM00934">
    <property type="entry name" value="OMPdecase"/>
    <property type="match status" value="1"/>
</dbReference>
<dbReference type="SUPFAM" id="SSF51366">
    <property type="entry name" value="Ribulose-phoshate binding barrel"/>
    <property type="match status" value="1"/>
</dbReference>
<dbReference type="PROSITE" id="PS00156">
    <property type="entry name" value="OMPDECASE"/>
    <property type="match status" value="1"/>
</dbReference>
<name>PYRF_HELP2</name>
<comment type="function">
    <text evidence="1">Catalyzes the decarboxylation of orotidine 5'-monophosphate (OMP) to uridine 5'-monophosphate (UMP).</text>
</comment>
<comment type="catalytic activity">
    <reaction evidence="1">
        <text>orotidine 5'-phosphate + H(+) = UMP + CO2</text>
        <dbReference type="Rhea" id="RHEA:11596"/>
        <dbReference type="ChEBI" id="CHEBI:15378"/>
        <dbReference type="ChEBI" id="CHEBI:16526"/>
        <dbReference type="ChEBI" id="CHEBI:57538"/>
        <dbReference type="ChEBI" id="CHEBI:57865"/>
        <dbReference type="EC" id="4.1.1.23"/>
    </reaction>
</comment>
<comment type="pathway">
    <text evidence="1">Pyrimidine metabolism; UMP biosynthesis via de novo pathway; UMP from orotate: step 2/2.</text>
</comment>
<comment type="subunit">
    <text evidence="1">Homodimer.</text>
</comment>
<comment type="similarity">
    <text evidence="1">Belongs to the OMP decarboxylase family. Type 1 subfamily.</text>
</comment>
<keyword id="KW-0210">Decarboxylase</keyword>
<keyword id="KW-0456">Lyase</keyword>
<keyword id="KW-0665">Pyrimidine biosynthesis</keyword>